<protein>
    <recommendedName>
        <fullName evidence="1">Ribosomal RNA small subunit methyltransferase A</fullName>
        <ecNumber evidence="1">2.1.1.182</ecNumber>
    </recommendedName>
    <alternativeName>
        <fullName evidence="1">16S rRNA (adenine(1518)-N(6)/adenine(1519)-N(6))-dimethyltransferase</fullName>
    </alternativeName>
    <alternativeName>
        <fullName evidence="1">16S rRNA dimethyladenosine transferase</fullName>
    </alternativeName>
    <alternativeName>
        <fullName evidence="1">16S rRNA dimethylase</fullName>
    </alternativeName>
    <alternativeName>
        <fullName evidence="1">S-adenosylmethionine-6-N', N'-adenosyl(rRNA) dimethyltransferase</fullName>
    </alternativeName>
</protein>
<proteinExistence type="inferred from homology"/>
<evidence type="ECO:0000255" key="1">
    <source>
        <dbReference type="HAMAP-Rule" id="MF_00607"/>
    </source>
</evidence>
<keyword id="KW-0963">Cytoplasm</keyword>
<keyword id="KW-0489">Methyltransferase</keyword>
<keyword id="KW-1185">Reference proteome</keyword>
<keyword id="KW-0694">RNA-binding</keyword>
<keyword id="KW-0698">rRNA processing</keyword>
<keyword id="KW-0949">S-adenosyl-L-methionine</keyword>
<keyword id="KW-0808">Transferase</keyword>
<sequence>MMRVKAKKALGQHFLRDLSIAERIADTLSEHKALPVLEIGPGMGVLTQFLLRKGHDVRVIEIDGESVSYLREEFPELSDRIIEGDFLHYPLSELFPGGRQYCLIGNYPYNISSQIFFRLLDVREQIPCCSGMLQREVAMRLASPPGKKDYGILSVLLQLWYNIEYLFTVDASVFDPPPKVQSGVIRLTRNDRKELPCSEKALKTVVKTAFGQRRKTLRNSLRGILPAGFDRFDEPVFSKRPEQLSPDDFIALTLLLQQ</sequence>
<comment type="function">
    <text evidence="1">Specifically dimethylates two adjacent adenosines (A1518 and A1519) in the loop of a conserved hairpin near the 3'-end of 16S rRNA in the 30S particle. May play a critical role in biogenesis of 30S subunits.</text>
</comment>
<comment type="catalytic activity">
    <reaction evidence="1">
        <text>adenosine(1518)/adenosine(1519) in 16S rRNA + 4 S-adenosyl-L-methionine = N(6)-dimethyladenosine(1518)/N(6)-dimethyladenosine(1519) in 16S rRNA + 4 S-adenosyl-L-homocysteine + 4 H(+)</text>
        <dbReference type="Rhea" id="RHEA:19609"/>
        <dbReference type="Rhea" id="RHEA-COMP:10232"/>
        <dbReference type="Rhea" id="RHEA-COMP:10233"/>
        <dbReference type="ChEBI" id="CHEBI:15378"/>
        <dbReference type="ChEBI" id="CHEBI:57856"/>
        <dbReference type="ChEBI" id="CHEBI:59789"/>
        <dbReference type="ChEBI" id="CHEBI:74411"/>
        <dbReference type="ChEBI" id="CHEBI:74493"/>
        <dbReference type="EC" id="2.1.1.182"/>
    </reaction>
</comment>
<comment type="subcellular location">
    <subcellularLocation>
        <location evidence="1">Cytoplasm</location>
    </subcellularLocation>
</comment>
<comment type="similarity">
    <text evidence="1">Belongs to the class I-like SAM-binding methyltransferase superfamily. rRNA adenine N(6)-methyltransferase family. RsmA subfamily.</text>
</comment>
<gene>
    <name evidence="1" type="primary">rsmA</name>
    <name evidence="1" type="synonym">ksgA</name>
    <name type="ordered locus">PG_0135</name>
</gene>
<dbReference type="EC" id="2.1.1.182" evidence="1"/>
<dbReference type="EMBL" id="AE015924">
    <property type="protein sequence ID" value="AAQ65376.1"/>
    <property type="molecule type" value="Genomic_DNA"/>
</dbReference>
<dbReference type="RefSeq" id="WP_004583779.1">
    <property type="nucleotide sequence ID" value="NC_002950.2"/>
</dbReference>
<dbReference type="SMR" id="Q7MXN7"/>
<dbReference type="STRING" id="242619.PG_0135"/>
<dbReference type="EnsemblBacteria" id="AAQ65376">
    <property type="protein sequence ID" value="AAQ65376"/>
    <property type="gene ID" value="PG_0135"/>
</dbReference>
<dbReference type="GeneID" id="29255497"/>
<dbReference type="KEGG" id="pgi:PG_0135"/>
<dbReference type="eggNOG" id="COG0030">
    <property type="taxonomic scope" value="Bacteria"/>
</dbReference>
<dbReference type="HOGENOM" id="CLU_041220_0_1_10"/>
<dbReference type="Proteomes" id="UP000000588">
    <property type="component" value="Chromosome"/>
</dbReference>
<dbReference type="GO" id="GO:0005829">
    <property type="term" value="C:cytosol"/>
    <property type="evidence" value="ECO:0007669"/>
    <property type="project" value="TreeGrafter"/>
</dbReference>
<dbReference type="GO" id="GO:0052908">
    <property type="term" value="F:16S rRNA (adenine(1518)-N(6)/adenine(1519)-N(6))-dimethyltransferase activity"/>
    <property type="evidence" value="ECO:0007669"/>
    <property type="project" value="UniProtKB-EC"/>
</dbReference>
<dbReference type="GO" id="GO:0003723">
    <property type="term" value="F:RNA binding"/>
    <property type="evidence" value="ECO:0007669"/>
    <property type="project" value="UniProtKB-KW"/>
</dbReference>
<dbReference type="FunFam" id="3.40.50.150:FF:000157">
    <property type="entry name" value="Ribosomal RNA small subunit methyltransferase A"/>
    <property type="match status" value="1"/>
</dbReference>
<dbReference type="Gene3D" id="1.10.8.100">
    <property type="entry name" value="Ribosomal RNA adenine dimethylase-like, domain 2"/>
    <property type="match status" value="1"/>
</dbReference>
<dbReference type="Gene3D" id="3.40.50.150">
    <property type="entry name" value="Vaccinia Virus protein VP39"/>
    <property type="match status" value="1"/>
</dbReference>
<dbReference type="HAMAP" id="MF_00607">
    <property type="entry name" value="16SrRNA_methyltr_A"/>
    <property type="match status" value="1"/>
</dbReference>
<dbReference type="InterPro" id="IPR001737">
    <property type="entry name" value="KsgA/Erm"/>
</dbReference>
<dbReference type="InterPro" id="IPR023165">
    <property type="entry name" value="rRNA_Ade_diMease-like_C"/>
</dbReference>
<dbReference type="InterPro" id="IPR020596">
    <property type="entry name" value="rRNA_Ade_Mease_Trfase_CS"/>
</dbReference>
<dbReference type="InterPro" id="IPR020598">
    <property type="entry name" value="rRNA_Ade_methylase_Trfase_N"/>
</dbReference>
<dbReference type="InterPro" id="IPR011530">
    <property type="entry name" value="rRNA_adenine_dimethylase"/>
</dbReference>
<dbReference type="InterPro" id="IPR029063">
    <property type="entry name" value="SAM-dependent_MTases_sf"/>
</dbReference>
<dbReference type="NCBIfam" id="TIGR00755">
    <property type="entry name" value="ksgA"/>
    <property type="match status" value="1"/>
</dbReference>
<dbReference type="PANTHER" id="PTHR11727">
    <property type="entry name" value="DIMETHYLADENOSINE TRANSFERASE"/>
    <property type="match status" value="1"/>
</dbReference>
<dbReference type="PANTHER" id="PTHR11727:SF7">
    <property type="entry name" value="DIMETHYLADENOSINE TRANSFERASE-RELATED"/>
    <property type="match status" value="1"/>
</dbReference>
<dbReference type="Pfam" id="PF00398">
    <property type="entry name" value="RrnaAD"/>
    <property type="match status" value="1"/>
</dbReference>
<dbReference type="SMART" id="SM00650">
    <property type="entry name" value="rADc"/>
    <property type="match status" value="1"/>
</dbReference>
<dbReference type="SUPFAM" id="SSF53335">
    <property type="entry name" value="S-adenosyl-L-methionine-dependent methyltransferases"/>
    <property type="match status" value="1"/>
</dbReference>
<dbReference type="PROSITE" id="PS01131">
    <property type="entry name" value="RRNA_A_DIMETH"/>
    <property type="match status" value="1"/>
</dbReference>
<dbReference type="PROSITE" id="PS51689">
    <property type="entry name" value="SAM_RNA_A_N6_MT"/>
    <property type="match status" value="1"/>
</dbReference>
<reference key="1">
    <citation type="journal article" date="2003" name="J. Bacteriol.">
        <title>Complete genome sequence of the oral pathogenic bacterium Porphyromonas gingivalis strain W83.</title>
        <authorList>
            <person name="Nelson K.E."/>
            <person name="Fleischmann R.D."/>
            <person name="DeBoy R.T."/>
            <person name="Paulsen I.T."/>
            <person name="Fouts D.E."/>
            <person name="Eisen J.A."/>
            <person name="Daugherty S.C."/>
            <person name="Dodson R.J."/>
            <person name="Durkin A.S."/>
            <person name="Gwinn M.L."/>
            <person name="Haft D.H."/>
            <person name="Kolonay J.F."/>
            <person name="Nelson W.C."/>
            <person name="Mason T.M."/>
            <person name="Tallon L."/>
            <person name="Gray J."/>
            <person name="Granger D."/>
            <person name="Tettelin H."/>
            <person name="Dong H."/>
            <person name="Galvin J.L."/>
            <person name="Duncan M.J."/>
            <person name="Dewhirst F.E."/>
            <person name="Fraser C.M."/>
        </authorList>
    </citation>
    <scope>NUCLEOTIDE SEQUENCE [LARGE SCALE GENOMIC DNA]</scope>
    <source>
        <strain>ATCC BAA-308 / W83</strain>
    </source>
</reference>
<name>RSMA_PORGI</name>
<accession>Q7MXN7</accession>
<feature type="chain" id="PRO_0000101581" description="Ribosomal RNA small subunit methyltransferase A">
    <location>
        <begin position="1"/>
        <end position="258"/>
    </location>
</feature>
<feature type="binding site" evidence="1">
    <location>
        <position position="13"/>
    </location>
    <ligand>
        <name>S-adenosyl-L-methionine</name>
        <dbReference type="ChEBI" id="CHEBI:59789"/>
    </ligand>
</feature>
<feature type="binding site" evidence="1">
    <location>
        <position position="15"/>
    </location>
    <ligand>
        <name>S-adenosyl-L-methionine</name>
        <dbReference type="ChEBI" id="CHEBI:59789"/>
    </ligand>
</feature>
<feature type="binding site" evidence="1">
    <location>
        <position position="40"/>
    </location>
    <ligand>
        <name>S-adenosyl-L-methionine</name>
        <dbReference type="ChEBI" id="CHEBI:59789"/>
    </ligand>
</feature>
<feature type="binding site" evidence="1">
    <location>
        <position position="61"/>
    </location>
    <ligand>
        <name>S-adenosyl-L-methionine</name>
        <dbReference type="ChEBI" id="CHEBI:59789"/>
    </ligand>
</feature>
<feature type="binding site" evidence="1">
    <location>
        <position position="85"/>
    </location>
    <ligand>
        <name>S-adenosyl-L-methionine</name>
        <dbReference type="ChEBI" id="CHEBI:59789"/>
    </ligand>
</feature>
<feature type="binding site" evidence="1">
    <location>
        <position position="106"/>
    </location>
    <ligand>
        <name>S-adenosyl-L-methionine</name>
        <dbReference type="ChEBI" id="CHEBI:59789"/>
    </ligand>
</feature>
<organism>
    <name type="scientific">Porphyromonas gingivalis (strain ATCC BAA-308 / W83)</name>
    <dbReference type="NCBI Taxonomy" id="242619"/>
    <lineage>
        <taxon>Bacteria</taxon>
        <taxon>Pseudomonadati</taxon>
        <taxon>Bacteroidota</taxon>
        <taxon>Bacteroidia</taxon>
        <taxon>Bacteroidales</taxon>
        <taxon>Porphyromonadaceae</taxon>
        <taxon>Porphyromonas</taxon>
    </lineage>
</organism>